<feature type="chain" id="PRO_0000294228" description="Photosystem I P700 chlorophyll a apoprotein A1">
    <location>
        <begin position="1"/>
        <end position="750"/>
    </location>
</feature>
<feature type="transmembrane region" description="Helical; Name=I" evidence="1">
    <location>
        <begin position="70"/>
        <end position="93"/>
    </location>
</feature>
<feature type="transmembrane region" description="Helical; Name=II" evidence="1">
    <location>
        <begin position="156"/>
        <end position="179"/>
    </location>
</feature>
<feature type="transmembrane region" description="Helical; Name=III" evidence="1">
    <location>
        <begin position="195"/>
        <end position="219"/>
    </location>
</feature>
<feature type="transmembrane region" description="Helical; Name=IV" evidence="1">
    <location>
        <begin position="291"/>
        <end position="309"/>
    </location>
</feature>
<feature type="transmembrane region" description="Helical; Name=V" evidence="1">
    <location>
        <begin position="346"/>
        <end position="369"/>
    </location>
</feature>
<feature type="transmembrane region" description="Helical; Name=VI" evidence="1">
    <location>
        <begin position="385"/>
        <end position="411"/>
    </location>
</feature>
<feature type="transmembrane region" description="Helical; Name=VII" evidence="1">
    <location>
        <begin position="433"/>
        <end position="455"/>
    </location>
</feature>
<feature type="transmembrane region" description="Helical; Name=VIII" evidence="1">
    <location>
        <begin position="531"/>
        <end position="549"/>
    </location>
</feature>
<feature type="transmembrane region" description="Helical; Name=IX" evidence="1">
    <location>
        <begin position="589"/>
        <end position="610"/>
    </location>
</feature>
<feature type="transmembrane region" description="Helical; Name=X" evidence="1">
    <location>
        <begin position="664"/>
        <end position="686"/>
    </location>
</feature>
<feature type="transmembrane region" description="Helical; Name=XI" evidence="1">
    <location>
        <begin position="724"/>
        <end position="744"/>
    </location>
</feature>
<feature type="binding site" evidence="1">
    <location>
        <position position="573"/>
    </location>
    <ligand>
        <name>[4Fe-4S] cluster</name>
        <dbReference type="ChEBI" id="CHEBI:49883"/>
        <note>ligand shared between dimeric partners</note>
    </ligand>
</feature>
<feature type="binding site" evidence="1">
    <location>
        <position position="582"/>
    </location>
    <ligand>
        <name>[4Fe-4S] cluster</name>
        <dbReference type="ChEBI" id="CHEBI:49883"/>
        <note>ligand shared between dimeric partners</note>
    </ligand>
</feature>
<feature type="binding site" description="axial binding residue" evidence="1">
    <location>
        <position position="675"/>
    </location>
    <ligand>
        <name>chlorophyll a'</name>
        <dbReference type="ChEBI" id="CHEBI:189419"/>
        <label>A1</label>
    </ligand>
    <ligandPart>
        <name>Mg</name>
        <dbReference type="ChEBI" id="CHEBI:25107"/>
    </ligandPart>
</feature>
<feature type="binding site" description="axial binding residue" evidence="1">
    <location>
        <position position="683"/>
    </location>
    <ligand>
        <name>chlorophyll a</name>
        <dbReference type="ChEBI" id="CHEBI:58416"/>
        <label>A3</label>
    </ligand>
    <ligandPart>
        <name>Mg</name>
        <dbReference type="ChEBI" id="CHEBI:25107"/>
    </ligandPart>
</feature>
<feature type="binding site" evidence="1">
    <location>
        <position position="691"/>
    </location>
    <ligand>
        <name>chlorophyll a</name>
        <dbReference type="ChEBI" id="CHEBI:58416"/>
        <label>A3</label>
    </ligand>
</feature>
<feature type="binding site" evidence="1">
    <location>
        <position position="692"/>
    </location>
    <ligand>
        <name>phylloquinone</name>
        <dbReference type="ChEBI" id="CHEBI:18067"/>
        <label>A</label>
    </ligand>
</feature>
<organism>
    <name type="scientific">Phaseolus vulgaris</name>
    <name type="common">Kidney bean</name>
    <name type="synonym">French bean</name>
    <dbReference type="NCBI Taxonomy" id="3885"/>
    <lineage>
        <taxon>Eukaryota</taxon>
        <taxon>Viridiplantae</taxon>
        <taxon>Streptophyta</taxon>
        <taxon>Embryophyta</taxon>
        <taxon>Tracheophyta</taxon>
        <taxon>Spermatophyta</taxon>
        <taxon>Magnoliopsida</taxon>
        <taxon>eudicotyledons</taxon>
        <taxon>Gunneridae</taxon>
        <taxon>Pentapetalae</taxon>
        <taxon>rosids</taxon>
        <taxon>fabids</taxon>
        <taxon>Fabales</taxon>
        <taxon>Fabaceae</taxon>
        <taxon>Papilionoideae</taxon>
        <taxon>50 kb inversion clade</taxon>
        <taxon>NPAAA clade</taxon>
        <taxon>indigoferoid/millettioid clade</taxon>
        <taxon>Phaseoleae</taxon>
        <taxon>Phaseolus</taxon>
    </lineage>
</organism>
<accession>A4GG97</accession>
<accession>A8W820</accession>
<keyword id="KW-0004">4Fe-4S</keyword>
<keyword id="KW-0148">Chlorophyll</keyword>
<keyword id="KW-0150">Chloroplast</keyword>
<keyword id="KW-0157">Chromophore</keyword>
<keyword id="KW-0249">Electron transport</keyword>
<keyword id="KW-0408">Iron</keyword>
<keyword id="KW-0411">Iron-sulfur</keyword>
<keyword id="KW-0460">Magnesium</keyword>
<keyword id="KW-0472">Membrane</keyword>
<keyword id="KW-0479">Metal-binding</keyword>
<keyword id="KW-0560">Oxidoreductase</keyword>
<keyword id="KW-0602">Photosynthesis</keyword>
<keyword id="KW-0603">Photosystem I</keyword>
<keyword id="KW-0934">Plastid</keyword>
<keyword id="KW-0793">Thylakoid</keyword>
<keyword id="KW-0812">Transmembrane</keyword>
<keyword id="KW-1133">Transmembrane helix</keyword>
<keyword id="KW-0813">Transport</keyword>
<protein>
    <recommendedName>
        <fullName evidence="1">Photosystem I P700 chlorophyll a apoprotein A1</fullName>
        <ecNumber evidence="1">1.97.1.12</ecNumber>
    </recommendedName>
    <alternativeName>
        <fullName evidence="1">PSI-A</fullName>
    </alternativeName>
    <alternativeName>
        <fullName evidence="1">PsaA</fullName>
    </alternativeName>
</protein>
<gene>
    <name evidence="1" type="primary">psaA</name>
</gene>
<evidence type="ECO:0000255" key="1">
    <source>
        <dbReference type="HAMAP-Rule" id="MF_00458"/>
    </source>
</evidence>
<comment type="function">
    <text>PsaA and PsaB bind P700, the primary electron donor of photosystem I (PSI), as well as the electron acceptors A0, A1 and FX. PSI is a plastocyanin-ferredoxin oxidoreductase, converting photonic excitation into a charge separation, which transfers an electron from the donor P700 chlorophyll pair to the spectroscopically characterized acceptors A0, A1, FX, FA and FB in turn. Oxidized P700 is reduced on the lumenal side of the thylakoid membrane by plastocyanin.</text>
</comment>
<comment type="catalytic activity">
    <reaction evidence="1">
        <text>reduced [plastocyanin] + hnu + oxidized [2Fe-2S]-[ferredoxin] = oxidized [plastocyanin] + reduced [2Fe-2S]-[ferredoxin]</text>
        <dbReference type="Rhea" id="RHEA:30407"/>
        <dbReference type="Rhea" id="RHEA-COMP:10000"/>
        <dbReference type="Rhea" id="RHEA-COMP:10001"/>
        <dbReference type="Rhea" id="RHEA-COMP:10039"/>
        <dbReference type="Rhea" id="RHEA-COMP:10040"/>
        <dbReference type="ChEBI" id="CHEBI:29036"/>
        <dbReference type="ChEBI" id="CHEBI:30212"/>
        <dbReference type="ChEBI" id="CHEBI:33737"/>
        <dbReference type="ChEBI" id="CHEBI:33738"/>
        <dbReference type="ChEBI" id="CHEBI:49552"/>
        <dbReference type="EC" id="1.97.1.12"/>
    </reaction>
</comment>
<comment type="cofactor">
    <text evidence="1">P700 is a chlorophyll a/chlorophyll a' dimer, A0 is one or more chlorophyll a, A1 is one or both phylloquinones and FX is a shared 4Fe-4S iron-sulfur center.</text>
</comment>
<comment type="subunit">
    <text evidence="1">The PsaA/B heterodimer binds the P700 chlorophyll special pair and subsequent electron acceptors. PSI consists of a core antenna complex that captures photons, and an electron transfer chain that converts photonic excitation into a charge separation. The eukaryotic PSI reaction center is composed of at least 11 subunits.</text>
</comment>
<comment type="subcellular location">
    <subcellularLocation>
        <location evidence="1">Plastid</location>
        <location evidence="1">Chloroplast thylakoid membrane</location>
        <topology evidence="1">Multi-pass membrane protein</topology>
    </subcellularLocation>
</comment>
<comment type="similarity">
    <text evidence="1">Belongs to the PsaA/PsaB family.</text>
</comment>
<geneLocation type="chloroplast"/>
<dbReference type="EC" id="1.97.1.12" evidence="1"/>
<dbReference type="EMBL" id="DQ886273">
    <property type="protein sequence ID" value="ABH88078.1"/>
    <property type="molecule type" value="Genomic_DNA"/>
</dbReference>
<dbReference type="EMBL" id="EU196765">
    <property type="protein sequence ID" value="ABW22790.1"/>
    <property type="molecule type" value="Genomic_DNA"/>
</dbReference>
<dbReference type="RefSeq" id="YP_001122798.1">
    <property type="nucleotide sequence ID" value="NC_009259.1"/>
</dbReference>
<dbReference type="SMR" id="A4GG97"/>
<dbReference type="GeneID" id="4961778"/>
<dbReference type="KEGG" id="pvu:4961778"/>
<dbReference type="eggNOG" id="ENOG502QRYE">
    <property type="taxonomic scope" value="Eukaryota"/>
</dbReference>
<dbReference type="GO" id="GO:0009535">
    <property type="term" value="C:chloroplast thylakoid membrane"/>
    <property type="evidence" value="ECO:0007669"/>
    <property type="project" value="UniProtKB-SubCell"/>
</dbReference>
<dbReference type="GO" id="GO:0009522">
    <property type="term" value="C:photosystem I"/>
    <property type="evidence" value="ECO:0007669"/>
    <property type="project" value="UniProtKB-KW"/>
</dbReference>
<dbReference type="GO" id="GO:0051539">
    <property type="term" value="F:4 iron, 4 sulfur cluster binding"/>
    <property type="evidence" value="ECO:0007669"/>
    <property type="project" value="UniProtKB-KW"/>
</dbReference>
<dbReference type="GO" id="GO:0016168">
    <property type="term" value="F:chlorophyll binding"/>
    <property type="evidence" value="ECO:0007669"/>
    <property type="project" value="UniProtKB-KW"/>
</dbReference>
<dbReference type="GO" id="GO:0009055">
    <property type="term" value="F:electron transfer activity"/>
    <property type="evidence" value="ECO:0007669"/>
    <property type="project" value="UniProtKB-UniRule"/>
</dbReference>
<dbReference type="GO" id="GO:0000287">
    <property type="term" value="F:magnesium ion binding"/>
    <property type="evidence" value="ECO:0007669"/>
    <property type="project" value="UniProtKB-UniRule"/>
</dbReference>
<dbReference type="GO" id="GO:0016491">
    <property type="term" value="F:oxidoreductase activity"/>
    <property type="evidence" value="ECO:0007669"/>
    <property type="project" value="UniProtKB-KW"/>
</dbReference>
<dbReference type="GO" id="GO:0015979">
    <property type="term" value="P:photosynthesis"/>
    <property type="evidence" value="ECO:0007669"/>
    <property type="project" value="UniProtKB-UniRule"/>
</dbReference>
<dbReference type="FunFam" id="1.20.1130.10:FF:000001">
    <property type="entry name" value="Photosystem I P700 chlorophyll a apoprotein A2"/>
    <property type="match status" value="1"/>
</dbReference>
<dbReference type="Gene3D" id="1.20.1130.10">
    <property type="entry name" value="Photosystem I PsaA/PsaB"/>
    <property type="match status" value="1"/>
</dbReference>
<dbReference type="HAMAP" id="MF_00458">
    <property type="entry name" value="PSI_PsaA"/>
    <property type="match status" value="1"/>
</dbReference>
<dbReference type="InterPro" id="IPR006243">
    <property type="entry name" value="PSI_PsaA"/>
</dbReference>
<dbReference type="InterPro" id="IPR001280">
    <property type="entry name" value="PSI_PsaA/B"/>
</dbReference>
<dbReference type="InterPro" id="IPR020586">
    <property type="entry name" value="PSI_PsaA/B_CS"/>
</dbReference>
<dbReference type="InterPro" id="IPR036408">
    <property type="entry name" value="PSI_PsaA/B_sf"/>
</dbReference>
<dbReference type="NCBIfam" id="TIGR01335">
    <property type="entry name" value="psaA"/>
    <property type="match status" value="1"/>
</dbReference>
<dbReference type="PANTHER" id="PTHR30128">
    <property type="entry name" value="OUTER MEMBRANE PROTEIN, OMPA-RELATED"/>
    <property type="match status" value="1"/>
</dbReference>
<dbReference type="PANTHER" id="PTHR30128:SF19">
    <property type="entry name" value="PHOTOSYSTEM I P700 CHLOROPHYLL A APOPROTEIN A1-RELATED"/>
    <property type="match status" value="1"/>
</dbReference>
<dbReference type="Pfam" id="PF00223">
    <property type="entry name" value="PsaA_PsaB"/>
    <property type="match status" value="1"/>
</dbReference>
<dbReference type="PIRSF" id="PIRSF002905">
    <property type="entry name" value="PSI_A"/>
    <property type="match status" value="1"/>
</dbReference>
<dbReference type="PRINTS" id="PR00257">
    <property type="entry name" value="PHOTSYSPSAAB"/>
</dbReference>
<dbReference type="SUPFAM" id="SSF81558">
    <property type="entry name" value="Photosystem I subunits PsaA/PsaB"/>
    <property type="match status" value="1"/>
</dbReference>
<dbReference type="PROSITE" id="PS00419">
    <property type="entry name" value="PHOTOSYSTEM_I_PSAAB"/>
    <property type="match status" value="1"/>
</dbReference>
<name>PSAA_PHAVU</name>
<reference key="1">
    <citation type="journal article" date="2007" name="BMC Genomics">
        <title>Rapid evolutionary change of common bean (Phaseolus vulgaris L) plastome, and the genomic diversification of legume chloroplasts.</title>
        <authorList>
            <person name="Guo X."/>
            <person name="Castillo-Ramirez S."/>
            <person name="Gonzalez V."/>
            <person name="Bustos P."/>
            <person name="Fernandez-Vazquez J.L."/>
            <person name="Santamaria R.I."/>
            <person name="Arellano J."/>
            <person name="Cevallos M.A."/>
            <person name="Davila G."/>
        </authorList>
    </citation>
    <scope>NUCLEOTIDE SEQUENCE [LARGE SCALE GENOMIC DNA]</scope>
    <source>
        <strain>cv. Negro Jamapa</strain>
    </source>
</reference>
<reference key="2">
    <citation type="submission" date="2007-10" db="EMBL/GenBank/DDBJ databases">
        <title>Complete nucleotide sequence of the plastid genome of the common bean, Phaseolus vulgaris.</title>
        <authorList>
            <person name="Moore M.J."/>
            <person name="Triplett E.W."/>
            <person name="Broughton W.J."/>
            <person name="Soltis P.S."/>
            <person name="Soltis D.E."/>
        </authorList>
    </citation>
    <scope>NUCLEOTIDE SEQUENCE [LARGE SCALE GENOMIC DNA]</scope>
</reference>
<proteinExistence type="inferred from homology"/>
<sequence>MIIRSPEPEVKILVDRDPIKTSFEEWAKPGHFSRTIAKGPDTTTWIWNLHADAHDFDSHTNDLEEISRKVFSAHFGQLSIIFLWLSGMYFHGARFSNYEAWLSDPTHIRPSAQVVWPIVGQEILNGDVGGGFRGIQITSGFFQIWRASGITNELQLYCTAIGALVFAALMLFAGWFHYHKAAPKLAWFQDVESMLNHHLTGLLGLGSLSWAGHQIHVSLPINQFLNAAVDPKEIPLPHEFILNRDLLAQLYPSFAEGATPFFTLNWSKYGEFLTFRGGLDPVTGGLWLTDIIHHHLAIAILFLIAGHMYRTNWGIGHSIKDILEAHKGPFTGQGHKGLYEILTTSWHAQLSINLAMLGSLTIVVAHHMYSMPPYPYLATDYGTQLSLFTHHMWIGGFLIVGAAAHAAIFMVRDYDPTIRYNDLLDRVLRHRDAIISHLNWVCIFLGFHSFGLYIHNDTMSALGRPQDMFSDTAIQLQPIFAQWIQNTHALAPGTTAPGAATSTSLTWGGENLVAVGGKVALLPIPLGTADFLVHHIHAFTIHVTVLILLKGVLFARSSRLIPDKANLGFRFPCDGPGRGGTCQVSAWDHVFLGLFWMYNSISVVIFHFSWKMQSDVWGSISDQGIVTHITGGNFAQSSITINGWLRDFLWAQASQVIQSYGSSLSAYGLFFLGAHFVWAFSLMFLFSGRGYWQELIESIVWAHNKLKVAPATQPRALSIVQGRAVGVTHYLLGGIATTWAFFLARIIAVG</sequence>